<gene>
    <name evidence="1" type="primary">rpsB</name>
    <name type="ordered locus">CC_1923</name>
</gene>
<organism>
    <name type="scientific">Caulobacter vibrioides (strain ATCC 19089 / CIP 103742 / CB 15)</name>
    <name type="common">Caulobacter crescentus</name>
    <dbReference type="NCBI Taxonomy" id="190650"/>
    <lineage>
        <taxon>Bacteria</taxon>
        <taxon>Pseudomonadati</taxon>
        <taxon>Pseudomonadota</taxon>
        <taxon>Alphaproteobacteria</taxon>
        <taxon>Caulobacterales</taxon>
        <taxon>Caulobacteraceae</taxon>
        <taxon>Caulobacter</taxon>
    </lineage>
</organism>
<dbReference type="EMBL" id="AE005673">
    <property type="protein sequence ID" value="AAK23898.1"/>
    <property type="molecule type" value="Genomic_DNA"/>
</dbReference>
<dbReference type="PIR" id="F87487">
    <property type="entry name" value="F87487"/>
</dbReference>
<dbReference type="RefSeq" id="NP_420730.1">
    <property type="nucleotide sequence ID" value="NC_002696.2"/>
</dbReference>
<dbReference type="RefSeq" id="WP_010919789.1">
    <property type="nucleotide sequence ID" value="NC_002696.2"/>
</dbReference>
<dbReference type="SMR" id="Q9A703"/>
<dbReference type="STRING" id="190650.CC_1923"/>
<dbReference type="EnsemblBacteria" id="AAK23898">
    <property type="protein sequence ID" value="AAK23898"/>
    <property type="gene ID" value="CC_1923"/>
</dbReference>
<dbReference type="KEGG" id="ccr:CC_1923"/>
<dbReference type="PATRIC" id="fig|190650.5.peg.1940"/>
<dbReference type="eggNOG" id="COG0052">
    <property type="taxonomic scope" value="Bacteria"/>
</dbReference>
<dbReference type="HOGENOM" id="CLU_040318_2_1_5"/>
<dbReference type="BioCyc" id="CAULO:CC1923-MONOMER"/>
<dbReference type="Proteomes" id="UP000001816">
    <property type="component" value="Chromosome"/>
</dbReference>
<dbReference type="GO" id="GO:0022627">
    <property type="term" value="C:cytosolic small ribosomal subunit"/>
    <property type="evidence" value="ECO:0007669"/>
    <property type="project" value="TreeGrafter"/>
</dbReference>
<dbReference type="GO" id="GO:0003735">
    <property type="term" value="F:structural constituent of ribosome"/>
    <property type="evidence" value="ECO:0007669"/>
    <property type="project" value="InterPro"/>
</dbReference>
<dbReference type="GO" id="GO:0006412">
    <property type="term" value="P:translation"/>
    <property type="evidence" value="ECO:0007669"/>
    <property type="project" value="UniProtKB-UniRule"/>
</dbReference>
<dbReference type="CDD" id="cd01425">
    <property type="entry name" value="RPS2"/>
    <property type="match status" value="1"/>
</dbReference>
<dbReference type="Gene3D" id="3.40.50.10490">
    <property type="entry name" value="Glucose-6-phosphate isomerase like protein, domain 1"/>
    <property type="match status" value="1"/>
</dbReference>
<dbReference type="Gene3D" id="1.10.287.610">
    <property type="entry name" value="Helix hairpin bin"/>
    <property type="match status" value="1"/>
</dbReference>
<dbReference type="HAMAP" id="MF_00291_B">
    <property type="entry name" value="Ribosomal_uS2_B"/>
    <property type="match status" value="1"/>
</dbReference>
<dbReference type="InterPro" id="IPR001865">
    <property type="entry name" value="Ribosomal_uS2"/>
</dbReference>
<dbReference type="InterPro" id="IPR005706">
    <property type="entry name" value="Ribosomal_uS2_bac/mit/plastid"/>
</dbReference>
<dbReference type="InterPro" id="IPR018130">
    <property type="entry name" value="Ribosomal_uS2_CS"/>
</dbReference>
<dbReference type="InterPro" id="IPR023591">
    <property type="entry name" value="Ribosomal_uS2_flav_dom_sf"/>
</dbReference>
<dbReference type="NCBIfam" id="TIGR01011">
    <property type="entry name" value="rpsB_bact"/>
    <property type="match status" value="1"/>
</dbReference>
<dbReference type="PANTHER" id="PTHR12534">
    <property type="entry name" value="30S RIBOSOMAL PROTEIN S2 PROKARYOTIC AND ORGANELLAR"/>
    <property type="match status" value="1"/>
</dbReference>
<dbReference type="PANTHER" id="PTHR12534:SF0">
    <property type="entry name" value="SMALL RIBOSOMAL SUBUNIT PROTEIN US2M"/>
    <property type="match status" value="1"/>
</dbReference>
<dbReference type="Pfam" id="PF00318">
    <property type="entry name" value="Ribosomal_S2"/>
    <property type="match status" value="1"/>
</dbReference>
<dbReference type="PRINTS" id="PR00395">
    <property type="entry name" value="RIBOSOMALS2"/>
</dbReference>
<dbReference type="SUPFAM" id="SSF52313">
    <property type="entry name" value="Ribosomal protein S2"/>
    <property type="match status" value="1"/>
</dbReference>
<dbReference type="PROSITE" id="PS00962">
    <property type="entry name" value="RIBOSOMAL_S2_1"/>
    <property type="match status" value="1"/>
</dbReference>
<dbReference type="PROSITE" id="PS00963">
    <property type="entry name" value="RIBOSOMAL_S2_2"/>
    <property type="match status" value="1"/>
</dbReference>
<evidence type="ECO:0000255" key="1">
    <source>
        <dbReference type="HAMAP-Rule" id="MF_00291"/>
    </source>
</evidence>
<evidence type="ECO:0000305" key="2"/>
<sequence length="268" mass="28702">MALPEFSMRQLLEAGAHFGHQTHRWNPKMDRYIFGSRSNIHIIDLSQSIPLLHQALVKVREVAAAGGRVLFVGTKRQASDPVATAAKRCAQYYVNHRWLGGTLTNWRTVSGSIARLRELEGVLAGEGQGRSKKELLQLTRERDKLELSLGGIKDMGGIPDIMFVIDTNKEAIAILEARKLNIPVVAILDTNCDPDGITYPIPGNDDAARALQLYCDLIADAVLDGLAAGQAAAGVDLGASVAPVEPALARELAPEAPAAEAAPESAEG</sequence>
<keyword id="KW-1185">Reference proteome</keyword>
<keyword id="KW-0687">Ribonucleoprotein</keyword>
<keyword id="KW-0689">Ribosomal protein</keyword>
<accession>Q9A703</accession>
<proteinExistence type="inferred from homology"/>
<protein>
    <recommendedName>
        <fullName evidence="1">Small ribosomal subunit protein uS2</fullName>
    </recommendedName>
    <alternativeName>
        <fullName evidence="2">30S ribosomal protein S2</fullName>
    </alternativeName>
</protein>
<reference key="1">
    <citation type="journal article" date="2001" name="Proc. Natl. Acad. Sci. U.S.A.">
        <title>Complete genome sequence of Caulobacter crescentus.</title>
        <authorList>
            <person name="Nierman W.C."/>
            <person name="Feldblyum T.V."/>
            <person name="Laub M.T."/>
            <person name="Paulsen I.T."/>
            <person name="Nelson K.E."/>
            <person name="Eisen J.A."/>
            <person name="Heidelberg J.F."/>
            <person name="Alley M.R.K."/>
            <person name="Ohta N."/>
            <person name="Maddock J.R."/>
            <person name="Potocka I."/>
            <person name="Nelson W.C."/>
            <person name="Newton A."/>
            <person name="Stephens C."/>
            <person name="Phadke N.D."/>
            <person name="Ely B."/>
            <person name="DeBoy R.T."/>
            <person name="Dodson R.J."/>
            <person name="Durkin A.S."/>
            <person name="Gwinn M.L."/>
            <person name="Haft D.H."/>
            <person name="Kolonay J.F."/>
            <person name="Smit J."/>
            <person name="Craven M.B."/>
            <person name="Khouri H.M."/>
            <person name="Shetty J."/>
            <person name="Berry K.J."/>
            <person name="Utterback T.R."/>
            <person name="Tran K."/>
            <person name="Wolf A.M."/>
            <person name="Vamathevan J.J."/>
            <person name="Ermolaeva M.D."/>
            <person name="White O."/>
            <person name="Salzberg S.L."/>
            <person name="Venter J.C."/>
            <person name="Shapiro L."/>
            <person name="Fraser C.M."/>
        </authorList>
    </citation>
    <scope>NUCLEOTIDE SEQUENCE [LARGE SCALE GENOMIC DNA]</scope>
    <source>
        <strain>ATCC 19089 / CIP 103742 / CB 15</strain>
    </source>
</reference>
<feature type="chain" id="PRO_0000134149" description="Small ribosomal subunit protein uS2">
    <location>
        <begin position="1"/>
        <end position="268"/>
    </location>
</feature>
<comment type="similarity">
    <text evidence="1">Belongs to the universal ribosomal protein uS2 family.</text>
</comment>
<name>RS2_CAUVC</name>